<accession>Q8D9F8</accession>
<gene>
    <name evidence="1" type="primary">proQ</name>
    <name type="ordered locus">VV1_2644</name>
</gene>
<keyword id="KW-0143">Chaperone</keyword>
<keyword id="KW-0963">Cytoplasm</keyword>
<keyword id="KW-0694">RNA-binding</keyword>
<feature type="chain" id="PRO_0000214627" description="RNA chaperone ProQ">
    <location>
        <begin position="1"/>
        <end position="207"/>
    </location>
</feature>
<feature type="region of interest" description="Disordered" evidence="2">
    <location>
        <begin position="100"/>
        <end position="156"/>
    </location>
</feature>
<feature type="compositionally biased region" description="Basic and acidic residues" evidence="2">
    <location>
        <begin position="111"/>
        <end position="126"/>
    </location>
</feature>
<feature type="compositionally biased region" description="Basic residues" evidence="2">
    <location>
        <begin position="127"/>
        <end position="139"/>
    </location>
</feature>
<evidence type="ECO:0000255" key="1">
    <source>
        <dbReference type="HAMAP-Rule" id="MF_00749"/>
    </source>
</evidence>
<evidence type="ECO:0000256" key="2">
    <source>
        <dbReference type="SAM" id="MobiDB-lite"/>
    </source>
</evidence>
<name>PROQ_VIBVU</name>
<organism>
    <name type="scientific">Vibrio vulnificus (strain CMCP6)</name>
    <dbReference type="NCBI Taxonomy" id="216895"/>
    <lineage>
        <taxon>Bacteria</taxon>
        <taxon>Pseudomonadati</taxon>
        <taxon>Pseudomonadota</taxon>
        <taxon>Gammaproteobacteria</taxon>
        <taxon>Vibrionales</taxon>
        <taxon>Vibrionaceae</taxon>
        <taxon>Vibrio</taxon>
    </lineage>
</organism>
<comment type="function">
    <text evidence="1">RNA chaperone with significant RNA binding, RNA strand exchange and RNA duplexing activities.</text>
</comment>
<comment type="subcellular location">
    <subcellularLocation>
        <location evidence="1">Cytoplasm</location>
    </subcellularLocation>
</comment>
<comment type="similarity">
    <text evidence="1">Belongs to the ProQ family.</text>
</comment>
<protein>
    <recommendedName>
        <fullName evidence="1">RNA chaperone ProQ</fullName>
    </recommendedName>
</protein>
<reference key="1">
    <citation type="submission" date="2002-12" db="EMBL/GenBank/DDBJ databases">
        <title>Complete genome sequence of Vibrio vulnificus CMCP6.</title>
        <authorList>
            <person name="Rhee J.H."/>
            <person name="Kim S.Y."/>
            <person name="Chung S.S."/>
            <person name="Kim J.J."/>
            <person name="Moon Y.H."/>
            <person name="Jeong H."/>
            <person name="Choy H.E."/>
        </authorList>
    </citation>
    <scope>NUCLEOTIDE SEQUENCE [LARGE SCALE GENOMIC DNA]</scope>
    <source>
        <strain>CMCP6</strain>
    </source>
</reference>
<sequence>MTEKLKNSKEVIAYIAECFPKCFTLEGEAKPLKIGIFQDLAERLSEDEKVSKTQLRAALRQYTSSWRYLHGVKLGATRVDLDGNECGVLEEEHVEHAKATLAESKAKVQARRKEQAQKARDEEKSKPKTKKAPQQRRANKPQAQKPAKQPVETRALNADELITGKAVNVNMGKGNMAATIVEINKDDVRVQLSNGLQMVVKAEHLRA</sequence>
<proteinExistence type="inferred from homology"/>
<dbReference type="EMBL" id="AE016795">
    <property type="protein sequence ID" value="AAO10992.2"/>
    <property type="molecule type" value="Genomic_DNA"/>
</dbReference>
<dbReference type="RefSeq" id="WP_011080487.1">
    <property type="nucleotide sequence ID" value="NC_004459.3"/>
</dbReference>
<dbReference type="SMR" id="Q8D9F8"/>
<dbReference type="KEGG" id="vvu:VV1_2644"/>
<dbReference type="HOGENOM" id="CLU_113254_0_0_6"/>
<dbReference type="Proteomes" id="UP000002275">
    <property type="component" value="Chromosome 1"/>
</dbReference>
<dbReference type="GO" id="GO:0005829">
    <property type="term" value="C:cytosol"/>
    <property type="evidence" value="ECO:0007669"/>
    <property type="project" value="TreeGrafter"/>
</dbReference>
<dbReference type="GO" id="GO:0033592">
    <property type="term" value="F:RNA strand annealing activity"/>
    <property type="evidence" value="ECO:0007669"/>
    <property type="project" value="UniProtKB-UniRule"/>
</dbReference>
<dbReference type="GO" id="GO:0034057">
    <property type="term" value="F:RNA strand-exchange activity"/>
    <property type="evidence" value="ECO:0007669"/>
    <property type="project" value="UniProtKB-UniRule"/>
</dbReference>
<dbReference type="GO" id="GO:0010608">
    <property type="term" value="P:post-transcriptional regulation of gene expression"/>
    <property type="evidence" value="ECO:0007669"/>
    <property type="project" value="InterPro"/>
</dbReference>
<dbReference type="FunFam" id="1.10.1710.10:FF:000001">
    <property type="entry name" value="RNA chaperone ProQ"/>
    <property type="match status" value="1"/>
</dbReference>
<dbReference type="Gene3D" id="1.10.1710.10">
    <property type="entry name" value="ProQ/FinO domain"/>
    <property type="match status" value="1"/>
</dbReference>
<dbReference type="HAMAP" id="MF_00749">
    <property type="entry name" value="ProQ"/>
    <property type="match status" value="1"/>
</dbReference>
<dbReference type="InterPro" id="IPR023529">
    <property type="entry name" value="ProQ"/>
</dbReference>
<dbReference type="InterPro" id="IPR016103">
    <property type="entry name" value="ProQ/FinO"/>
</dbReference>
<dbReference type="InterPro" id="IPR036442">
    <property type="entry name" value="ProQ/FinO_sf"/>
</dbReference>
<dbReference type="InterPro" id="IPR035236">
    <property type="entry name" value="ProQ_C"/>
</dbReference>
<dbReference type="NCBIfam" id="NF003434">
    <property type="entry name" value="PRK04950.1"/>
    <property type="match status" value="1"/>
</dbReference>
<dbReference type="PANTHER" id="PTHR38106">
    <property type="entry name" value="RNA CHAPERONE PROQ"/>
    <property type="match status" value="1"/>
</dbReference>
<dbReference type="PANTHER" id="PTHR38106:SF1">
    <property type="entry name" value="RNA CHAPERONE PROQ"/>
    <property type="match status" value="1"/>
</dbReference>
<dbReference type="Pfam" id="PF04352">
    <property type="entry name" value="ProQ"/>
    <property type="match status" value="1"/>
</dbReference>
<dbReference type="Pfam" id="PF17516">
    <property type="entry name" value="ProQ_C"/>
    <property type="match status" value="1"/>
</dbReference>
<dbReference type="SMART" id="SM00945">
    <property type="entry name" value="ProQ"/>
    <property type="match status" value="1"/>
</dbReference>
<dbReference type="SUPFAM" id="SSF48657">
    <property type="entry name" value="FinO-like"/>
    <property type="match status" value="1"/>
</dbReference>